<dbReference type="EMBL" id="Y14854">
    <property type="protein sequence ID" value="CAB38086.1"/>
    <property type="molecule type" value="mRNA"/>
</dbReference>
<dbReference type="SMR" id="P0DSM6"/>
<dbReference type="GO" id="GO:0042803">
    <property type="term" value="F:protein homodimerization activity"/>
    <property type="evidence" value="ECO:0000250"/>
    <property type="project" value="UniProtKB"/>
</dbReference>
<dbReference type="GO" id="GO:0006937">
    <property type="term" value="P:regulation of muscle contraction"/>
    <property type="evidence" value="ECO:0000250"/>
    <property type="project" value="UniProtKB"/>
</dbReference>
<dbReference type="FunFam" id="1.20.5.170:FF:000005">
    <property type="entry name" value="Tropomyosin alpha-1 chain"/>
    <property type="match status" value="1"/>
</dbReference>
<dbReference type="FunFam" id="1.20.5.170:FF:000001">
    <property type="entry name" value="Tropomyosin alpha-1 chain isoform 1"/>
    <property type="match status" value="1"/>
</dbReference>
<dbReference type="FunFam" id="1.20.5.340:FF:000001">
    <property type="entry name" value="Tropomyosin alpha-1 chain isoform 2"/>
    <property type="match status" value="1"/>
</dbReference>
<dbReference type="Gene3D" id="1.20.5.170">
    <property type="match status" value="2"/>
</dbReference>
<dbReference type="Gene3D" id="1.20.5.340">
    <property type="match status" value="1"/>
</dbReference>
<dbReference type="InterPro" id="IPR000533">
    <property type="entry name" value="Tropomyosin"/>
</dbReference>
<dbReference type="PANTHER" id="PTHR19269">
    <property type="entry name" value="TROPOMYOSIN"/>
    <property type="match status" value="1"/>
</dbReference>
<dbReference type="Pfam" id="PF00261">
    <property type="entry name" value="Tropomyosin"/>
    <property type="match status" value="1"/>
</dbReference>
<dbReference type="PRINTS" id="PR00194">
    <property type="entry name" value="TROPOMYOSIN"/>
</dbReference>
<dbReference type="SUPFAM" id="SSF57997">
    <property type="entry name" value="Tropomyosin"/>
    <property type="match status" value="1"/>
</dbReference>
<dbReference type="PROSITE" id="PS00326">
    <property type="entry name" value="TROPOMYOSIN"/>
    <property type="match status" value="1"/>
</dbReference>
<organism>
    <name type="scientific">Periplaneta americana</name>
    <name type="common">American cockroach</name>
    <name type="synonym">Blatta americana</name>
    <dbReference type="NCBI Taxonomy" id="6978"/>
    <lineage>
        <taxon>Eukaryota</taxon>
        <taxon>Metazoa</taxon>
        <taxon>Ecdysozoa</taxon>
        <taxon>Arthropoda</taxon>
        <taxon>Hexapoda</taxon>
        <taxon>Insecta</taxon>
        <taxon>Pterygota</taxon>
        <taxon>Neoptera</taxon>
        <taxon>Polyneoptera</taxon>
        <taxon>Dictyoptera</taxon>
        <taxon>Blattodea</taxon>
        <taxon>Blattoidea</taxon>
        <taxon>Blattidae</taxon>
        <taxon>Blattinae</taxon>
        <taxon>Periplaneta</taxon>
    </lineage>
</organism>
<comment type="function">
    <text evidence="2">Tropomyosin, in association with the troponin complex, plays a central role in the calcium dependent regulation of muscle contraction.</text>
</comment>
<comment type="subunit">
    <text evidence="1">Homodimer.</text>
</comment>
<comment type="domain">
    <text evidence="6">The molecule is in a coiled coil structure that is formed by 2 polypeptide chains. The sequence exhibits a prominent seven-residues periodicity.</text>
</comment>
<comment type="allergen">
    <text evidence="4">Causes an allergic reaction in human. Binds to IgE in 41% of 29 household insect P.americana-allergic patients living in France.</text>
</comment>
<comment type="similarity">
    <text evidence="6">Belongs to the tropomyosin family.</text>
</comment>
<keyword id="KW-0020">Allergen</keyword>
<keyword id="KW-0175">Coiled coil</keyword>
<keyword id="KW-0514">Muscle protein</keyword>
<keyword id="KW-0677">Repeat</keyword>
<proteinExistence type="evidence at protein level"/>
<feature type="chain" id="PRO_0000205689" description="Tropomyosin Per a 7.0101">
    <location>
        <begin position="1"/>
        <end position="284"/>
    </location>
</feature>
<feature type="coiled-coil region" evidence="3">
    <location>
        <begin position="22"/>
        <end position="266"/>
    </location>
</feature>
<protein>
    <recommendedName>
        <fullName evidence="6">Tropomyosin Per a 7.0101</fullName>
    </recommendedName>
    <alternativeName>
        <fullName evidence="5">Allergen Per a 7</fullName>
    </alternativeName>
    <allergenName evidence="6">Per a 7.0101</allergenName>
</protein>
<reference key="1">
    <citation type="journal article" date="1999" name="J. Immunol.">
        <title>Molecular characterization of American cockroach tropomyosin (Periplaneta americana allergen 7), a cross-reactive allergen.</title>
        <authorList>
            <person name="Asturias J.A."/>
            <person name="Gomez-Bayon N."/>
            <person name="Arilla M.C."/>
            <person name="Martinez A."/>
            <person name="Palacios R."/>
            <person name="Sanchez-Gascon F."/>
            <person name="Martinez J."/>
        </authorList>
    </citation>
    <scope>NUCLEOTIDE SEQUENCE [MRNA]</scope>
    <scope>ALLERGEN</scope>
</reference>
<evidence type="ECO:0000250" key="1">
    <source>
        <dbReference type="UniProtKB" id="P40414"/>
    </source>
</evidence>
<evidence type="ECO:0000250" key="2">
    <source>
        <dbReference type="UniProtKB" id="Q22866"/>
    </source>
</evidence>
<evidence type="ECO:0000255" key="3"/>
<evidence type="ECO:0000269" key="4">
    <source>
    </source>
</evidence>
<evidence type="ECO:0000303" key="5">
    <source>
    </source>
</evidence>
<evidence type="ECO:0000305" key="6"/>
<sequence length="284" mass="32777">MDAIKKKMQAMKLEKDNAMDCALLCEQQARDANLRAEKAEEEARSLQKKIQQIENDLDQTMEQLMQVNAKLDEKDKALQNAESEVAALNRRIQLLEEDLERSEERLATATAKLAEASQAVDESERARKILESKGLADEERMDALENQLKEARFMAEEADKKYDEVARKLAMVEADLERAEERAESGESKIVELEEELRVVGNNLKSLEVSEEKANLREEEYKQQIKTLTTRLKEAEARAEFAERSVQKLQKEVDRLEDELVHEKEKYKFICDDLDMTFTELAGY</sequence>
<accession>P0DSM6</accession>
<accession>O97144</accession>
<accession>Q9UB83</accession>
<name>TPM01_PERAM</name>